<keyword id="KW-0002">3D-structure</keyword>
<keyword id="KW-0521">NADP</keyword>
<keyword id="KW-0560">Oxidoreductase</keyword>
<accession>A0A0H3JT80</accession>
<comment type="function">
    <text evidence="2 3 4">Catalyzes the NADPH-dependent reductive condensation of pyruvate to the intermediate formed by the adjacently encoded enzyme CntL, namely (2S)-2-amino-4-{[(1R)-1-carboxy-2-(1H-imidazol-4-yl)ethyl]amino}butanoate, leading to the production of staphylopine. This is the last step in the biosynthesis of the metallophore staphylopine, which is involved in the acquisition of nickel, cobalt, zinc, copper, and iron, and thus enables bacterial growth inside the host, where metal access is limited. Therefore, this enzyme probably contributes to staphylococcal virulence. Can use neither NADH nor alpha-ketoglutarate in place of NADPH and pyruvate, respectively.</text>
</comment>
<comment type="catalytic activity">
    <reaction evidence="2 3 4">
        <text>staphylopine + NADP(+) + H2O = (2S)-2-amino-4-{[(1R)-1-carboxy-2-(1H-imidazol-4-yl)ethyl]amino}butanoate + pyruvate + NADPH + H(+)</text>
        <dbReference type="Rhea" id="RHEA:57508"/>
        <dbReference type="ChEBI" id="CHEBI:15361"/>
        <dbReference type="ChEBI" id="CHEBI:15377"/>
        <dbReference type="ChEBI" id="CHEBI:15378"/>
        <dbReference type="ChEBI" id="CHEBI:57783"/>
        <dbReference type="ChEBI" id="CHEBI:58349"/>
        <dbReference type="ChEBI" id="CHEBI:141669"/>
        <dbReference type="ChEBI" id="CHEBI:141808"/>
        <dbReference type="EC" id="1.5.1.52"/>
    </reaction>
    <physiologicalReaction direction="right-to-left" evidence="9 10">
        <dbReference type="Rhea" id="RHEA:57510"/>
    </physiologicalReaction>
</comment>
<comment type="biophysicochemical properties">
    <kinetics>
        <KM evidence="4">29 uM for pyruvate (at pH 8.0 and 22 degrees Celsius)</KM>
        <KM evidence="4">1400 uM for oxaloacetate (at pH 8.0 and 22 degrees Celsius)</KM>
        <KM evidence="4">3000 uM for glyoxylate (at pH 8.0 and 22 degrees Celsius)</KM>
        <text evidence="4">kcat is 0.26 sec(-1) with pyruvate as substrate. kcat is 0.26 sec(-1) with oxaloacetate as substrate. kcat is 0.074 sec(-1) with glyoxylate as substrate (at pH 8.0 and 22 degrees Celsius).</text>
    </kinetics>
</comment>
<comment type="subunit">
    <text evidence="4">Homodimer.</text>
</comment>
<comment type="induction">
    <text evidence="2">Up-regulated in metal-poor media.</text>
</comment>
<comment type="similarity">
    <text evidence="8">Belongs to the staphylopine dehydrogenase family.</text>
</comment>
<proteinExistence type="evidence at protein level"/>
<feature type="chain" id="PRO_0000447038" description="Staphylopine synthase">
    <location>
        <begin position="1"/>
        <end position="433"/>
    </location>
</feature>
<feature type="active site" description="Proton donor/acceptor" evidence="1">
    <location>
        <position position="216"/>
    </location>
</feature>
<feature type="binding site" evidence="4">
    <location>
        <begin position="9"/>
        <end position="12"/>
    </location>
    <ligand>
        <name>NADP(+)</name>
        <dbReference type="ChEBI" id="CHEBI:58349"/>
    </ligand>
</feature>
<feature type="binding site" evidence="4">
    <location>
        <position position="33"/>
    </location>
    <ligand>
        <name>NADP(+)</name>
        <dbReference type="ChEBI" id="CHEBI:58349"/>
    </ligand>
</feature>
<feature type="binding site" evidence="4">
    <location>
        <begin position="37"/>
        <end position="40"/>
    </location>
    <ligand>
        <name>NADP(+)</name>
        <dbReference type="ChEBI" id="CHEBI:58349"/>
    </ligand>
</feature>
<feature type="binding site" evidence="4">
    <location>
        <position position="99"/>
    </location>
    <ligand>
        <name>NADP(+)</name>
        <dbReference type="ChEBI" id="CHEBI:58349"/>
    </ligand>
</feature>
<feature type="strand" evidence="14">
    <location>
        <begin position="3"/>
        <end position="7"/>
    </location>
</feature>
<feature type="helix" evidence="14">
    <location>
        <begin position="11"/>
        <end position="23"/>
    </location>
</feature>
<feature type="strand" evidence="14">
    <location>
        <begin position="27"/>
        <end position="31"/>
    </location>
</feature>
<feature type="helix" evidence="14">
    <location>
        <begin position="34"/>
        <end position="36"/>
    </location>
</feature>
<feature type="helix" evidence="14">
    <location>
        <begin position="38"/>
        <end position="50"/>
    </location>
</feature>
<feature type="strand" evidence="14">
    <location>
        <begin position="53"/>
        <end position="59"/>
    </location>
</feature>
<feature type="helix" evidence="14">
    <location>
        <begin position="60"/>
        <end position="65"/>
    </location>
</feature>
<feature type="strand" evidence="14">
    <location>
        <begin position="67"/>
        <end position="69"/>
    </location>
</feature>
<feature type="strand" evidence="14">
    <location>
        <begin position="72"/>
        <end position="77"/>
    </location>
</feature>
<feature type="helix" evidence="14">
    <location>
        <begin position="78"/>
        <end position="80"/>
    </location>
</feature>
<feature type="strand" evidence="14">
    <location>
        <begin position="86"/>
        <end position="90"/>
    </location>
</feature>
<feature type="helix" evidence="14">
    <location>
        <begin position="94"/>
        <end position="96"/>
    </location>
</feature>
<feature type="helix" evidence="14">
    <location>
        <begin position="97"/>
        <end position="101"/>
    </location>
</feature>
<feature type="helix" evidence="14">
    <location>
        <begin position="106"/>
        <end position="111"/>
    </location>
</feature>
<feature type="strand" evidence="14">
    <location>
        <begin position="114"/>
        <end position="119"/>
    </location>
</feature>
<feature type="helix" evidence="14">
    <location>
        <begin position="124"/>
        <end position="132"/>
    </location>
</feature>
<feature type="turn" evidence="14">
    <location>
        <begin position="133"/>
        <end position="135"/>
    </location>
</feature>
<feature type="strand" evidence="14">
    <location>
        <begin position="140"/>
        <end position="146"/>
    </location>
</feature>
<feature type="strand" evidence="14">
    <location>
        <begin position="148"/>
        <end position="152"/>
    </location>
</feature>
<feature type="strand" evidence="14">
    <location>
        <begin position="161"/>
        <end position="167"/>
    </location>
</feature>
<feature type="strand" evidence="14">
    <location>
        <begin position="169"/>
        <end position="177"/>
    </location>
</feature>
<feature type="helix" evidence="14">
    <location>
        <begin position="181"/>
        <end position="192"/>
    </location>
</feature>
<feature type="strand" evidence="14">
    <location>
        <begin position="196"/>
        <end position="202"/>
    </location>
</feature>
<feature type="helix" evidence="14">
    <location>
        <begin position="203"/>
        <end position="207"/>
    </location>
</feature>
<feature type="helix" evidence="14">
    <location>
        <begin position="212"/>
        <end position="220"/>
    </location>
</feature>
<feature type="helix" evidence="14">
    <location>
        <begin position="223"/>
        <end position="230"/>
    </location>
</feature>
<feature type="strand" evidence="14">
    <location>
        <begin position="245"/>
        <end position="249"/>
    </location>
</feature>
<feature type="helix" evidence="14">
    <location>
        <begin position="250"/>
        <end position="269"/>
    </location>
</feature>
<feature type="helix" evidence="14">
    <location>
        <begin position="277"/>
        <end position="283"/>
    </location>
</feature>
<feature type="turn" evidence="14">
    <location>
        <begin position="290"/>
        <end position="292"/>
    </location>
</feature>
<feature type="helix" evidence="14">
    <location>
        <begin position="295"/>
        <end position="299"/>
    </location>
</feature>
<feature type="helix" evidence="14">
    <location>
        <begin position="301"/>
        <end position="303"/>
    </location>
</feature>
<feature type="helix" evidence="14">
    <location>
        <begin position="306"/>
        <end position="319"/>
    </location>
</feature>
<feature type="strand" evidence="14">
    <location>
        <begin position="351"/>
        <end position="354"/>
    </location>
</feature>
<feature type="helix" evidence="14">
    <location>
        <begin position="357"/>
        <end position="375"/>
    </location>
</feature>
<feature type="helix" evidence="14">
    <location>
        <begin position="381"/>
        <end position="400"/>
    </location>
</feature>
<feature type="turn" evidence="14">
    <location>
        <begin position="401"/>
        <end position="403"/>
    </location>
</feature>
<feature type="strand" evidence="14">
    <location>
        <begin position="404"/>
        <end position="406"/>
    </location>
</feature>
<feature type="helix" evidence="14">
    <location>
        <begin position="408"/>
        <end position="410"/>
    </location>
</feature>
<feature type="helix" evidence="14">
    <location>
        <begin position="416"/>
        <end position="428"/>
    </location>
</feature>
<gene>
    <name evidence="5" type="primary">cntM</name>
    <name evidence="11" type="ordered locus">SAV2468</name>
</gene>
<reference key="1">
    <citation type="journal article" date="2001" name="Lancet">
        <title>Whole genome sequencing of meticillin-resistant Staphylococcus aureus.</title>
        <authorList>
            <person name="Kuroda M."/>
            <person name="Ohta T."/>
            <person name="Uchiyama I."/>
            <person name="Baba T."/>
            <person name="Yuzawa H."/>
            <person name="Kobayashi I."/>
            <person name="Cui L."/>
            <person name="Oguchi A."/>
            <person name="Aoki K."/>
            <person name="Nagai Y."/>
            <person name="Lian J.-Q."/>
            <person name="Ito T."/>
            <person name="Kanamori M."/>
            <person name="Matsumaru H."/>
            <person name="Maruyama A."/>
            <person name="Murakami H."/>
            <person name="Hosoyama A."/>
            <person name="Mizutani-Ui Y."/>
            <person name="Takahashi N.K."/>
            <person name="Sawano T."/>
            <person name="Inoue R."/>
            <person name="Kaito C."/>
            <person name="Sekimizu K."/>
            <person name="Hirakawa H."/>
            <person name="Kuhara S."/>
            <person name="Goto S."/>
            <person name="Yabuzaki J."/>
            <person name="Kanehisa M."/>
            <person name="Yamashita A."/>
            <person name="Oshima K."/>
            <person name="Furuya K."/>
            <person name="Yoshino C."/>
            <person name="Shiba T."/>
            <person name="Hattori M."/>
            <person name="Ogasawara N."/>
            <person name="Hayashi H."/>
            <person name="Hiramatsu K."/>
        </authorList>
    </citation>
    <scope>NUCLEOTIDE SEQUENCE [LARGE SCALE GENOMIC DNA]</scope>
    <source>
        <strain>Mu50 / ATCC 700699</strain>
    </source>
</reference>
<reference key="2">
    <citation type="journal article" date="2016" name="Science">
        <title>Biosynthesis of a broad-spectrum nicotianamine-like metallophore in Staphylococcus aureus.</title>
        <authorList>
            <person name="Ghssein G."/>
            <person name="Brutesco C."/>
            <person name="Ouerdane L."/>
            <person name="Fojcik C."/>
            <person name="Izaute A."/>
            <person name="Wang S."/>
            <person name="Hajjar C."/>
            <person name="Lobinski R."/>
            <person name="Lemaire D."/>
            <person name="Richaud P."/>
            <person name="Voulhoux R."/>
            <person name="Espaillat A."/>
            <person name="Cava F."/>
            <person name="Pignol D."/>
            <person name="Borezee-Durant E."/>
            <person name="Arnoux P."/>
        </authorList>
    </citation>
    <scope>FUNCTION</scope>
    <scope>CATALYTIC ACTIVITY</scope>
    <scope>SUBSTRATE SPECIFICITY</scope>
    <scope>INDUCTION</scope>
    <source>
        <strain>Mu50 / ATCC 700699</strain>
    </source>
</reference>
<reference key="3">
    <citation type="journal article" date="2017" name="Biochemistry">
        <title>Biosynthesis of an Opine Metallophore by Pseudomonas aeruginosa.</title>
        <authorList>
            <person name="McFarlane J.S."/>
            <person name="Lamb A.L."/>
        </authorList>
    </citation>
    <scope>FUNCTION</scope>
    <scope>CATALYTIC ACTIVITY</scope>
    <scope>SUBSTRATE SPECIFICITY</scope>
    <source>
        <strain>Mu50 / ATCC 700699</strain>
    </source>
</reference>
<reference evidence="12 13" key="4">
    <citation type="journal article" date="2018" name="J. Biol. Chem.">
        <title>Staphylopine, pseudopaline, and yersinopine dehydrogenases: A structural and kinetic analysis of a new functional class of opine dehydrogenase.</title>
        <authorList>
            <person name="McFarlane J.S."/>
            <person name="Davis C.L."/>
            <person name="Lamb A.L."/>
        </authorList>
    </citation>
    <scope>X-RAY CRYSTALLOGRAPHY (2.29 ANGSTROMS) OF APOENZYME AND IN COMPLEX WITH NADP</scope>
    <scope>FUNCTION</scope>
    <scope>CATALYTIC ACTIVITY</scope>
    <scope>BIOPHYSICOCHEMICAL PROPERTIES</scope>
    <scope>SUBSTRATE SPECIFICITY</scope>
    <scope>SUBUNIT</scope>
    <source>
        <strain>Mu50 / ATCC 700699</strain>
    </source>
</reference>
<protein>
    <recommendedName>
        <fullName evidence="9">Staphylopine synthase</fullName>
        <ecNumber evidence="2 3 4">1.5.1.52</ecNumber>
    </recommendedName>
    <alternativeName>
        <fullName evidence="6 7">Opine dehydrogenase</fullName>
        <shortName evidence="6 7">ODH</shortName>
    </alternativeName>
    <alternativeName>
        <fullName evidence="7">Staphylopine dehydrogenase</fullName>
    </alternativeName>
</protein>
<organism>
    <name type="scientific">Staphylococcus aureus (strain Mu50 / ATCC 700699)</name>
    <dbReference type="NCBI Taxonomy" id="158878"/>
    <lineage>
        <taxon>Bacteria</taxon>
        <taxon>Bacillati</taxon>
        <taxon>Bacillota</taxon>
        <taxon>Bacilli</taxon>
        <taxon>Bacillales</taxon>
        <taxon>Staphylococcaceae</taxon>
        <taxon>Staphylococcus</taxon>
    </lineage>
</organism>
<name>ODH_STAAM</name>
<evidence type="ECO:0000250" key="1">
    <source>
        <dbReference type="UniProtKB" id="Q8CKU7"/>
    </source>
</evidence>
<evidence type="ECO:0000269" key="2">
    <source>
    </source>
</evidence>
<evidence type="ECO:0000269" key="3">
    <source>
    </source>
</evidence>
<evidence type="ECO:0000269" key="4">
    <source>
    </source>
</evidence>
<evidence type="ECO:0000303" key="5">
    <source>
    </source>
</evidence>
<evidence type="ECO:0000303" key="6">
    <source>
    </source>
</evidence>
<evidence type="ECO:0000303" key="7">
    <source>
    </source>
</evidence>
<evidence type="ECO:0000305" key="8"/>
<evidence type="ECO:0000305" key="9">
    <source>
    </source>
</evidence>
<evidence type="ECO:0000305" key="10">
    <source>
    </source>
</evidence>
<evidence type="ECO:0000312" key="11">
    <source>
        <dbReference type="EMBL" id="BAB58630.1"/>
    </source>
</evidence>
<evidence type="ECO:0007744" key="12">
    <source>
        <dbReference type="PDB" id="6C4R"/>
    </source>
</evidence>
<evidence type="ECO:0007744" key="13">
    <source>
        <dbReference type="PDB" id="6C4T"/>
    </source>
</evidence>
<evidence type="ECO:0007829" key="14">
    <source>
        <dbReference type="PDB" id="6H3D"/>
    </source>
</evidence>
<dbReference type="EC" id="1.5.1.52" evidence="2 3 4"/>
<dbReference type="EMBL" id="BA000017">
    <property type="protein sequence ID" value="BAB58630.1"/>
    <property type="molecule type" value="Genomic_DNA"/>
</dbReference>
<dbReference type="RefSeq" id="WP_000040588.1">
    <property type="nucleotide sequence ID" value="NC_002758.2"/>
</dbReference>
<dbReference type="PDB" id="6C4R">
    <property type="method" value="X-ray"/>
    <property type="resolution" value="2.29 A"/>
    <property type="chains" value="A=1-433"/>
</dbReference>
<dbReference type="PDB" id="6C4T">
    <property type="method" value="X-ray"/>
    <property type="resolution" value="2.49 A"/>
    <property type="chains" value="A=1-433"/>
</dbReference>
<dbReference type="PDB" id="6GMZ">
    <property type="method" value="X-ray"/>
    <property type="resolution" value="2.22 A"/>
    <property type="chains" value="A=1-433"/>
</dbReference>
<dbReference type="PDB" id="6H31">
    <property type="method" value="X-ray"/>
    <property type="resolution" value="2.30 A"/>
    <property type="chains" value="A/B=1-433"/>
</dbReference>
<dbReference type="PDB" id="6H3D">
    <property type="method" value="X-ray"/>
    <property type="resolution" value="2.05 A"/>
    <property type="chains" value="A=1-433"/>
</dbReference>
<dbReference type="PDB" id="6H3F">
    <property type="method" value="X-ray"/>
    <property type="resolution" value="2.21 A"/>
    <property type="chains" value="A=1-433"/>
</dbReference>
<dbReference type="PDBsum" id="6C4R"/>
<dbReference type="PDBsum" id="6C4T"/>
<dbReference type="PDBsum" id="6GMZ"/>
<dbReference type="PDBsum" id="6H31"/>
<dbReference type="PDBsum" id="6H3D"/>
<dbReference type="PDBsum" id="6H3F"/>
<dbReference type="SMR" id="A0A0H3JT80"/>
<dbReference type="KEGG" id="sav:SAV2468"/>
<dbReference type="HOGENOM" id="CLU_637619_0_0_9"/>
<dbReference type="BRENDA" id="1.5.1.52">
    <property type="organism ID" value="3352"/>
</dbReference>
<dbReference type="SABIO-RK" id="A0A0H3JT80"/>
<dbReference type="Proteomes" id="UP000002481">
    <property type="component" value="Chromosome"/>
</dbReference>
<dbReference type="GO" id="GO:0016491">
    <property type="term" value="F:oxidoreductase activity"/>
    <property type="evidence" value="ECO:0007669"/>
    <property type="project" value="UniProtKB-KW"/>
</dbReference>
<dbReference type="Gene3D" id="3.40.50.720">
    <property type="entry name" value="NAD(P)-binding Rossmann-like Domain"/>
    <property type="match status" value="1"/>
</dbReference>
<dbReference type="InterPro" id="IPR016935">
    <property type="entry name" value="Opine_metallophore_DH"/>
</dbReference>
<dbReference type="InterPro" id="IPR053620">
    <property type="entry name" value="Staphylopine_dehydrogenase"/>
</dbReference>
<dbReference type="NCBIfam" id="NF033600">
    <property type="entry name" value="staphylopine_DH"/>
    <property type="match status" value="1"/>
</dbReference>
<dbReference type="Pfam" id="PF10100">
    <property type="entry name" value="Staph_opine_DH"/>
    <property type="match status" value="1"/>
</dbReference>
<dbReference type="PIRSF" id="PIRSF029692">
    <property type="entry name" value="UCP029692"/>
    <property type="match status" value="1"/>
</dbReference>
<sequence length="433" mass="50072">MSKLLMIGTGPVAIQLANICYLKSDYEIDMVGRASTSEKSKRLYQAYKKEKQFEVKIQNEAHQHLEGKFEINRLYKDVKNVKGEYETVVMACTADAYYDTLQQLSLETLQSVKHVILISPTFGSQMIVEQFMSKFSQDIEVISFSTYLGDTRIVDKEAPNHVLTTGVKKKLYMGSTHSNSTMCQRISALAEQLKIQLEVVESPLHAETRNSSLYVHPPLFMNDFSLKAIFEGTDVPVYVYKLFPEGPITMTLIREMRLMWKEMMAILQAFRVPSVNLLQFMVKENYPVRPETLDEGDIEHFEILPDILQEYLLYVRYTAILIDPFSQPDENGHYFDFSAVPFKQVYKNEQDVVQIPRMPSEDYYRTAMIQHIGKMLGIKTPMIDQFLTRYEASCQAYKDMHQDQQLSSQFNTNLFEGDKALVTKFLEINRTLS</sequence>